<reference key="1">
    <citation type="journal article" date="2009" name="PLoS Genet.">
        <title>Organised genome dynamics in the Escherichia coli species results in highly diverse adaptive paths.</title>
        <authorList>
            <person name="Touchon M."/>
            <person name="Hoede C."/>
            <person name="Tenaillon O."/>
            <person name="Barbe V."/>
            <person name="Baeriswyl S."/>
            <person name="Bidet P."/>
            <person name="Bingen E."/>
            <person name="Bonacorsi S."/>
            <person name="Bouchier C."/>
            <person name="Bouvet O."/>
            <person name="Calteau A."/>
            <person name="Chiapello H."/>
            <person name="Clermont O."/>
            <person name="Cruveiller S."/>
            <person name="Danchin A."/>
            <person name="Diard M."/>
            <person name="Dossat C."/>
            <person name="Karoui M.E."/>
            <person name="Frapy E."/>
            <person name="Garry L."/>
            <person name="Ghigo J.M."/>
            <person name="Gilles A.M."/>
            <person name="Johnson J."/>
            <person name="Le Bouguenec C."/>
            <person name="Lescat M."/>
            <person name="Mangenot S."/>
            <person name="Martinez-Jehanne V."/>
            <person name="Matic I."/>
            <person name="Nassif X."/>
            <person name="Oztas S."/>
            <person name="Petit M.A."/>
            <person name="Pichon C."/>
            <person name="Rouy Z."/>
            <person name="Ruf C.S."/>
            <person name="Schneider D."/>
            <person name="Tourret J."/>
            <person name="Vacherie B."/>
            <person name="Vallenet D."/>
            <person name="Medigue C."/>
            <person name="Rocha E.P.C."/>
            <person name="Denamur E."/>
        </authorList>
    </citation>
    <scope>NUCLEOTIDE SEQUENCE [LARGE SCALE GENOMIC DNA]</scope>
    <source>
        <strain>UMN026 / ExPEC</strain>
    </source>
</reference>
<dbReference type="EC" id="6.3.4.21" evidence="1"/>
<dbReference type="EMBL" id="CU928163">
    <property type="protein sequence ID" value="CAR12334.1"/>
    <property type="molecule type" value="Genomic_DNA"/>
</dbReference>
<dbReference type="RefSeq" id="WP_001305916.1">
    <property type="nucleotide sequence ID" value="NC_011751.1"/>
</dbReference>
<dbReference type="RefSeq" id="YP_002411878.1">
    <property type="nucleotide sequence ID" value="NC_011751.1"/>
</dbReference>
<dbReference type="SMR" id="B7N398"/>
<dbReference type="STRING" id="585056.ECUMN_1125"/>
<dbReference type="KEGG" id="eum:ECUMN_1125"/>
<dbReference type="PATRIC" id="fig|585056.7.peg.1321"/>
<dbReference type="HOGENOM" id="CLU_030991_1_0_6"/>
<dbReference type="UniPathway" id="UPA00253">
    <property type="reaction ID" value="UER00457"/>
</dbReference>
<dbReference type="Proteomes" id="UP000007097">
    <property type="component" value="Chromosome"/>
</dbReference>
<dbReference type="GO" id="GO:0005829">
    <property type="term" value="C:cytosol"/>
    <property type="evidence" value="ECO:0007669"/>
    <property type="project" value="TreeGrafter"/>
</dbReference>
<dbReference type="GO" id="GO:0004516">
    <property type="term" value="F:nicotinate phosphoribosyltransferase activity"/>
    <property type="evidence" value="ECO:0007669"/>
    <property type="project" value="UniProtKB-UniRule"/>
</dbReference>
<dbReference type="GO" id="GO:0034355">
    <property type="term" value="P:NAD biosynthetic process via the salvage pathway"/>
    <property type="evidence" value="ECO:0007669"/>
    <property type="project" value="TreeGrafter"/>
</dbReference>
<dbReference type="CDD" id="cd01401">
    <property type="entry name" value="PncB_like"/>
    <property type="match status" value="1"/>
</dbReference>
<dbReference type="FunFam" id="3.20.140.10:FF:000001">
    <property type="entry name" value="Nicotinate phosphoribosyltransferase"/>
    <property type="match status" value="1"/>
</dbReference>
<dbReference type="Gene3D" id="3.20.140.10">
    <property type="entry name" value="nicotinate phosphoribosyltransferase"/>
    <property type="match status" value="1"/>
</dbReference>
<dbReference type="HAMAP" id="MF_00570">
    <property type="entry name" value="NAPRTase"/>
    <property type="match status" value="1"/>
</dbReference>
<dbReference type="InterPro" id="IPR041525">
    <property type="entry name" value="N/Namide_PRibTrfase"/>
</dbReference>
<dbReference type="InterPro" id="IPR040727">
    <property type="entry name" value="NAPRTase_N"/>
</dbReference>
<dbReference type="InterPro" id="IPR006406">
    <property type="entry name" value="Nic_PRibTrfase"/>
</dbReference>
<dbReference type="InterPro" id="IPR007229">
    <property type="entry name" value="Nic_PRibTrfase-Fam"/>
</dbReference>
<dbReference type="InterPro" id="IPR036068">
    <property type="entry name" value="Nicotinate_pribotase-like_C"/>
</dbReference>
<dbReference type="NCBIfam" id="TIGR01514">
    <property type="entry name" value="NAPRTase"/>
    <property type="match status" value="1"/>
</dbReference>
<dbReference type="NCBIfam" id="NF003704">
    <property type="entry name" value="PRK05321.1"/>
    <property type="match status" value="1"/>
</dbReference>
<dbReference type="PANTHER" id="PTHR11098">
    <property type="entry name" value="NICOTINATE PHOSPHORIBOSYLTRANSFERASE"/>
    <property type="match status" value="1"/>
</dbReference>
<dbReference type="PANTHER" id="PTHR11098:SF1">
    <property type="entry name" value="NICOTINATE PHOSPHORIBOSYLTRANSFERASE"/>
    <property type="match status" value="1"/>
</dbReference>
<dbReference type="Pfam" id="PF04095">
    <property type="entry name" value="NAPRTase"/>
    <property type="match status" value="1"/>
</dbReference>
<dbReference type="Pfam" id="PF17767">
    <property type="entry name" value="NAPRTase_N"/>
    <property type="match status" value="1"/>
</dbReference>
<dbReference type="PIRSF" id="PIRSF000484">
    <property type="entry name" value="NAPRT"/>
    <property type="match status" value="1"/>
</dbReference>
<dbReference type="SUPFAM" id="SSF51690">
    <property type="entry name" value="Nicotinate/Quinolinate PRTase C-terminal domain-like"/>
    <property type="match status" value="1"/>
</dbReference>
<dbReference type="SUPFAM" id="SSF54675">
    <property type="entry name" value="Nicotinate/Quinolinate PRTase N-terminal domain-like"/>
    <property type="match status" value="1"/>
</dbReference>
<name>PNCB_ECOLU</name>
<comment type="function">
    <text evidence="1">Catalyzes the synthesis of beta-nicotinate D-ribonucleotide from nicotinate and 5-phospho-D-ribose 1-phosphate at the expense of ATP.</text>
</comment>
<comment type="catalytic activity">
    <reaction evidence="1">
        <text>nicotinate + 5-phospho-alpha-D-ribose 1-diphosphate + ATP + H2O = nicotinate beta-D-ribonucleotide + ADP + phosphate + diphosphate</text>
        <dbReference type="Rhea" id="RHEA:36163"/>
        <dbReference type="ChEBI" id="CHEBI:15377"/>
        <dbReference type="ChEBI" id="CHEBI:30616"/>
        <dbReference type="ChEBI" id="CHEBI:32544"/>
        <dbReference type="ChEBI" id="CHEBI:33019"/>
        <dbReference type="ChEBI" id="CHEBI:43474"/>
        <dbReference type="ChEBI" id="CHEBI:57502"/>
        <dbReference type="ChEBI" id="CHEBI:58017"/>
        <dbReference type="ChEBI" id="CHEBI:456216"/>
        <dbReference type="EC" id="6.3.4.21"/>
    </reaction>
</comment>
<comment type="pathway">
    <text evidence="1">Cofactor biosynthesis; NAD(+) biosynthesis; nicotinate D-ribonucleotide from nicotinate: step 1/1.</text>
</comment>
<comment type="PTM">
    <text evidence="1">Transiently phosphorylated on a His residue during the reaction cycle. Phosphorylation strongly increases the affinity for substrates and increases the rate of nicotinate D-ribonucleotide production. Dephosphorylation regenerates the low-affinity form of the enzyme, leading to product release.</text>
</comment>
<comment type="similarity">
    <text evidence="1">Belongs to the NAPRTase family.</text>
</comment>
<keyword id="KW-0436">Ligase</keyword>
<keyword id="KW-0597">Phosphoprotein</keyword>
<keyword id="KW-0662">Pyridine nucleotide biosynthesis</keyword>
<organism>
    <name type="scientific">Escherichia coli O17:K52:H18 (strain UMN026 / ExPEC)</name>
    <dbReference type="NCBI Taxonomy" id="585056"/>
    <lineage>
        <taxon>Bacteria</taxon>
        <taxon>Pseudomonadati</taxon>
        <taxon>Pseudomonadota</taxon>
        <taxon>Gammaproteobacteria</taxon>
        <taxon>Enterobacterales</taxon>
        <taxon>Enterobacteriaceae</taxon>
        <taxon>Escherichia</taxon>
    </lineage>
</organism>
<evidence type="ECO:0000255" key="1">
    <source>
        <dbReference type="HAMAP-Rule" id="MF_00570"/>
    </source>
</evidence>
<proteinExistence type="inferred from homology"/>
<gene>
    <name evidence="1" type="primary">pncB</name>
    <name type="ordered locus">ECUMN_1125</name>
</gene>
<feature type="chain" id="PRO_1000129470" description="Nicotinate phosphoribosyltransferase">
    <location>
        <begin position="1"/>
        <end position="400"/>
    </location>
</feature>
<feature type="modified residue" description="Phosphohistidine; by autocatalysis" evidence="1">
    <location>
        <position position="220"/>
    </location>
</feature>
<sequence length="400" mass="45869">MTQFASPVLHSLLDTDAYKLHMQQAVFHHYYDVHVAAEFRCRGDDLLGIYADAIREQVQAMQHLRLQDDEYQWLSALPFFKADYLNWLREFRFNPEQVTVSNDNGKLDIRLSGPWREVILWEVPLLAVISEMVHRYRSPQADVAQALDTLESKLADFSALTAGLDMSRFHLMDFGTRRRFSREVQETIVKRLQQESWFVGTSNYDLARRLSLTPMGTQAHEWFQAHQQISPDLANSQRAALAAWLEEYPDQLGIALTDCITMDAFLRDFGVEFASRYQGLRHDSGDPVEWGEKAIAHYEKLGIDPQSKTLVFSDNLDLRKAVELYRHFSSRVQLSFGIGTRLTCDIPQVKPLNIVIKLVECNGKPVAKLSDSPGKTICHDKAFVRALRKAFDLPHIKKAS</sequence>
<accession>B7N398</accession>
<protein>
    <recommendedName>
        <fullName evidence="1">Nicotinate phosphoribosyltransferase</fullName>
        <shortName evidence="1">NAPRTase</shortName>
        <ecNumber evidence="1">6.3.4.21</ecNumber>
    </recommendedName>
</protein>